<gene>
    <name evidence="1" type="primary">lon</name>
    <name type="ordered locus">BDI_1874</name>
</gene>
<feature type="chain" id="PRO_0000396589" description="Lon protease">
    <location>
        <begin position="1"/>
        <end position="823"/>
    </location>
</feature>
<feature type="domain" description="Lon N-terminal" evidence="3">
    <location>
        <begin position="51"/>
        <end position="246"/>
    </location>
</feature>
<feature type="domain" description="Lon proteolytic" evidence="2">
    <location>
        <begin position="633"/>
        <end position="815"/>
    </location>
</feature>
<feature type="active site" evidence="1">
    <location>
        <position position="721"/>
    </location>
</feature>
<feature type="active site" evidence="1">
    <location>
        <position position="764"/>
    </location>
</feature>
<feature type="binding site" evidence="1">
    <location>
        <begin position="397"/>
        <end position="404"/>
    </location>
    <ligand>
        <name>ATP</name>
        <dbReference type="ChEBI" id="CHEBI:30616"/>
    </ligand>
</feature>
<proteinExistence type="inferred from homology"/>
<dbReference type="EC" id="3.4.21.53" evidence="1"/>
<dbReference type="EMBL" id="CP000140">
    <property type="protein sequence ID" value="ABR43609.1"/>
    <property type="molecule type" value="Genomic_DNA"/>
</dbReference>
<dbReference type="RefSeq" id="WP_005854849.1">
    <property type="nucleotide sequence ID" value="NZ_LR215978.1"/>
</dbReference>
<dbReference type="SMR" id="A6LD45"/>
<dbReference type="STRING" id="435591.BDI_1874"/>
<dbReference type="PaxDb" id="435591-BDI_1874"/>
<dbReference type="KEGG" id="pdi:BDI_1874"/>
<dbReference type="eggNOG" id="COG0466">
    <property type="taxonomic scope" value="Bacteria"/>
</dbReference>
<dbReference type="HOGENOM" id="CLU_004109_4_3_10"/>
<dbReference type="BioCyc" id="PDIS435591:G1G5A-1927-MONOMER"/>
<dbReference type="Proteomes" id="UP000000566">
    <property type="component" value="Chromosome"/>
</dbReference>
<dbReference type="GO" id="GO:0005737">
    <property type="term" value="C:cytoplasm"/>
    <property type="evidence" value="ECO:0007669"/>
    <property type="project" value="UniProtKB-SubCell"/>
</dbReference>
<dbReference type="GO" id="GO:0005524">
    <property type="term" value="F:ATP binding"/>
    <property type="evidence" value="ECO:0007669"/>
    <property type="project" value="UniProtKB-UniRule"/>
</dbReference>
<dbReference type="GO" id="GO:0016887">
    <property type="term" value="F:ATP hydrolysis activity"/>
    <property type="evidence" value="ECO:0007669"/>
    <property type="project" value="UniProtKB-UniRule"/>
</dbReference>
<dbReference type="GO" id="GO:0004176">
    <property type="term" value="F:ATP-dependent peptidase activity"/>
    <property type="evidence" value="ECO:0007669"/>
    <property type="project" value="UniProtKB-UniRule"/>
</dbReference>
<dbReference type="GO" id="GO:0043565">
    <property type="term" value="F:sequence-specific DNA binding"/>
    <property type="evidence" value="ECO:0007669"/>
    <property type="project" value="UniProtKB-UniRule"/>
</dbReference>
<dbReference type="GO" id="GO:0004252">
    <property type="term" value="F:serine-type endopeptidase activity"/>
    <property type="evidence" value="ECO:0007669"/>
    <property type="project" value="UniProtKB-UniRule"/>
</dbReference>
<dbReference type="GO" id="GO:0034605">
    <property type="term" value="P:cellular response to heat"/>
    <property type="evidence" value="ECO:0007669"/>
    <property type="project" value="UniProtKB-UniRule"/>
</dbReference>
<dbReference type="GO" id="GO:0006515">
    <property type="term" value="P:protein quality control for misfolded or incompletely synthesized proteins"/>
    <property type="evidence" value="ECO:0007669"/>
    <property type="project" value="UniProtKB-UniRule"/>
</dbReference>
<dbReference type="CDD" id="cd19500">
    <property type="entry name" value="RecA-like_Lon"/>
    <property type="match status" value="1"/>
</dbReference>
<dbReference type="FunFam" id="3.40.50.300:FF:000021">
    <property type="entry name" value="Lon protease homolog"/>
    <property type="match status" value="1"/>
</dbReference>
<dbReference type="Gene3D" id="1.10.8.60">
    <property type="match status" value="1"/>
</dbReference>
<dbReference type="Gene3D" id="1.20.5.5270">
    <property type="match status" value="1"/>
</dbReference>
<dbReference type="Gene3D" id="1.20.58.1480">
    <property type="match status" value="1"/>
</dbReference>
<dbReference type="Gene3D" id="3.30.230.10">
    <property type="match status" value="1"/>
</dbReference>
<dbReference type="Gene3D" id="2.30.130.40">
    <property type="entry name" value="LON domain-like"/>
    <property type="match status" value="1"/>
</dbReference>
<dbReference type="Gene3D" id="3.40.50.300">
    <property type="entry name" value="P-loop containing nucleotide triphosphate hydrolases"/>
    <property type="match status" value="1"/>
</dbReference>
<dbReference type="HAMAP" id="MF_01973">
    <property type="entry name" value="lon_bact"/>
    <property type="match status" value="1"/>
</dbReference>
<dbReference type="InterPro" id="IPR003593">
    <property type="entry name" value="AAA+_ATPase"/>
</dbReference>
<dbReference type="InterPro" id="IPR003959">
    <property type="entry name" value="ATPase_AAA_core"/>
</dbReference>
<dbReference type="InterPro" id="IPR027543">
    <property type="entry name" value="Lon_bac"/>
</dbReference>
<dbReference type="InterPro" id="IPR004815">
    <property type="entry name" value="Lon_bac/euk-typ"/>
</dbReference>
<dbReference type="InterPro" id="IPR054594">
    <property type="entry name" value="Lon_lid"/>
</dbReference>
<dbReference type="InterPro" id="IPR008269">
    <property type="entry name" value="Lon_proteolytic"/>
</dbReference>
<dbReference type="InterPro" id="IPR027065">
    <property type="entry name" value="Lon_Prtase"/>
</dbReference>
<dbReference type="InterPro" id="IPR003111">
    <property type="entry name" value="Lon_prtase_N"/>
</dbReference>
<dbReference type="InterPro" id="IPR046336">
    <property type="entry name" value="Lon_prtase_N_sf"/>
</dbReference>
<dbReference type="InterPro" id="IPR027417">
    <property type="entry name" value="P-loop_NTPase"/>
</dbReference>
<dbReference type="InterPro" id="IPR008268">
    <property type="entry name" value="Peptidase_S16_AS"/>
</dbReference>
<dbReference type="InterPro" id="IPR015947">
    <property type="entry name" value="PUA-like_sf"/>
</dbReference>
<dbReference type="InterPro" id="IPR020568">
    <property type="entry name" value="Ribosomal_Su5_D2-typ_SF"/>
</dbReference>
<dbReference type="InterPro" id="IPR014721">
    <property type="entry name" value="Ribsml_uS5_D2-typ_fold_subgr"/>
</dbReference>
<dbReference type="NCBIfam" id="TIGR00763">
    <property type="entry name" value="lon"/>
    <property type="match status" value="1"/>
</dbReference>
<dbReference type="PANTHER" id="PTHR10046">
    <property type="entry name" value="ATP DEPENDENT LON PROTEASE FAMILY MEMBER"/>
    <property type="match status" value="1"/>
</dbReference>
<dbReference type="Pfam" id="PF00004">
    <property type="entry name" value="AAA"/>
    <property type="match status" value="1"/>
</dbReference>
<dbReference type="Pfam" id="PF05362">
    <property type="entry name" value="Lon_C"/>
    <property type="match status" value="1"/>
</dbReference>
<dbReference type="Pfam" id="PF22667">
    <property type="entry name" value="Lon_lid"/>
    <property type="match status" value="1"/>
</dbReference>
<dbReference type="Pfam" id="PF02190">
    <property type="entry name" value="LON_substr_bdg"/>
    <property type="match status" value="1"/>
</dbReference>
<dbReference type="PIRSF" id="PIRSF001174">
    <property type="entry name" value="Lon_proteas"/>
    <property type="match status" value="1"/>
</dbReference>
<dbReference type="PRINTS" id="PR00830">
    <property type="entry name" value="ENDOLAPTASE"/>
</dbReference>
<dbReference type="SMART" id="SM00382">
    <property type="entry name" value="AAA"/>
    <property type="match status" value="1"/>
</dbReference>
<dbReference type="SMART" id="SM00464">
    <property type="entry name" value="LON"/>
    <property type="match status" value="1"/>
</dbReference>
<dbReference type="SUPFAM" id="SSF52540">
    <property type="entry name" value="P-loop containing nucleoside triphosphate hydrolases"/>
    <property type="match status" value="1"/>
</dbReference>
<dbReference type="SUPFAM" id="SSF88697">
    <property type="entry name" value="PUA domain-like"/>
    <property type="match status" value="1"/>
</dbReference>
<dbReference type="SUPFAM" id="SSF54211">
    <property type="entry name" value="Ribosomal protein S5 domain 2-like"/>
    <property type="match status" value="1"/>
</dbReference>
<dbReference type="PROSITE" id="PS51787">
    <property type="entry name" value="LON_N"/>
    <property type="match status" value="1"/>
</dbReference>
<dbReference type="PROSITE" id="PS51786">
    <property type="entry name" value="LON_PROTEOLYTIC"/>
    <property type="match status" value="1"/>
</dbReference>
<dbReference type="PROSITE" id="PS01046">
    <property type="entry name" value="LON_SER"/>
    <property type="match status" value="1"/>
</dbReference>
<evidence type="ECO:0000255" key="1">
    <source>
        <dbReference type="HAMAP-Rule" id="MF_01973"/>
    </source>
</evidence>
<evidence type="ECO:0000255" key="2">
    <source>
        <dbReference type="PROSITE-ProRule" id="PRU01122"/>
    </source>
</evidence>
<evidence type="ECO:0000255" key="3">
    <source>
        <dbReference type="PROSITE-ProRule" id="PRU01123"/>
    </source>
</evidence>
<comment type="function">
    <text evidence="1">ATP-dependent serine protease that mediates the selective degradation of mutant and abnormal proteins as well as certain short-lived regulatory proteins. Required for cellular homeostasis and for survival from DNA damage and developmental changes induced by stress. Degrades polypeptides processively to yield small peptide fragments that are 5 to 10 amino acids long. Binds to DNA in a double-stranded, site-specific manner.</text>
</comment>
<comment type="catalytic activity">
    <reaction evidence="1">
        <text>Hydrolysis of proteins in presence of ATP.</text>
        <dbReference type="EC" id="3.4.21.53"/>
    </reaction>
</comment>
<comment type="subunit">
    <text evidence="1">Homohexamer. Organized in a ring with a central cavity.</text>
</comment>
<comment type="subcellular location">
    <subcellularLocation>
        <location evidence="1">Cytoplasm</location>
    </subcellularLocation>
</comment>
<comment type="induction">
    <text evidence="1">By heat shock.</text>
</comment>
<comment type="similarity">
    <text evidence="1">Belongs to the peptidase S16 family.</text>
</comment>
<reference key="1">
    <citation type="journal article" date="2007" name="PLoS Biol.">
        <title>Evolution of symbiotic bacteria in the distal human intestine.</title>
        <authorList>
            <person name="Xu J."/>
            <person name="Mahowald M.A."/>
            <person name="Ley R.E."/>
            <person name="Lozupone C.A."/>
            <person name="Hamady M."/>
            <person name="Martens E.C."/>
            <person name="Henrissat B."/>
            <person name="Coutinho P.M."/>
            <person name="Minx P."/>
            <person name="Latreille P."/>
            <person name="Cordum H."/>
            <person name="Van Brunt A."/>
            <person name="Kim K."/>
            <person name="Fulton R.S."/>
            <person name="Fulton L.A."/>
            <person name="Clifton S.W."/>
            <person name="Wilson R.K."/>
            <person name="Knight R.D."/>
            <person name="Gordon J.I."/>
        </authorList>
    </citation>
    <scope>NUCLEOTIDE SEQUENCE [LARGE SCALE GENOMIC DNA]</scope>
    <source>
        <strain>ATCC 8503 / DSM 20701 / CIP 104284 / JCM 5825 / NCTC 11152</strain>
    </source>
</reference>
<accession>A6LD45</accession>
<keyword id="KW-0067">ATP-binding</keyword>
<keyword id="KW-0963">Cytoplasm</keyword>
<keyword id="KW-0378">Hydrolase</keyword>
<keyword id="KW-0547">Nucleotide-binding</keyword>
<keyword id="KW-0645">Protease</keyword>
<keyword id="KW-1185">Reference proteome</keyword>
<keyword id="KW-0720">Serine protease</keyword>
<keyword id="KW-0346">Stress response</keyword>
<organism>
    <name type="scientific">Parabacteroides distasonis (strain ATCC 8503 / DSM 20701 / CIP 104284 / JCM 5825 / NCTC 11152)</name>
    <dbReference type="NCBI Taxonomy" id="435591"/>
    <lineage>
        <taxon>Bacteria</taxon>
        <taxon>Pseudomonadati</taxon>
        <taxon>Bacteroidota</taxon>
        <taxon>Bacteroidia</taxon>
        <taxon>Bacteroidales</taxon>
        <taxon>Tannerellaceae</taxon>
        <taxon>Parabacteroides</taxon>
    </lineage>
</organism>
<sequence>MNVYMKEKTRVFCQNSFDDLDDNIGIVMPILTECDVDEDFTEGIEKVGDTIPILPLRNMVLFPGVALPVIIGRPKSMRLIKEAVHKKSLIGVVCQKEMGTEDPILEDLYTTGVIADIVRVLEMPDGSTTVILQGKKRFELNELTETDPYLSGKITVLEDTKPDKTDREFEALISTIKDLTIKMLGAVAEPPRDLIFSIKNNKNVLYVVNFSCSNIPSGSAEKQQLLLIGDLKERAYRLLFILNREYQLVELKASIQMKTHEDINQQQKEYFLQQQIKTIQEELGGNINELEIKELREKASRKKWPAEVAQVFEKELRKLERLHPQSPDYSVQTQYVQNIVNLPWNEYSKDNFNLSHAQKVLDRDHYGLEKVKERIIEHLAVLKLKGDMKSPIICLYGPPGVGKTSLGRSIAEALRRKYVRVSLGGLHDEAEIRGHRRTYIGAMCGRIIQNIQKAGTSNPVFILDEIDKITNDFKGDPASALLEVLDPEQNNAFHDNYLDIDYDLSKVMFIATANNLNTISQPLLDRMELIEVSGYIMEEKVEIAAKHLVPKQMDVHGLKKGSVKFPKKTLQVIVEAYTRESGVRELDKKIAKIMRKLARKVASDEPIPTSIKPEDLYEYLGAVEYSRDKYQGNDYAGVVTGLAWTAVGGEILFVESSLSKGKGSKLTLTGNLGDVMKESAMLALEYIHAHAAQFNINEELFENWNVHVHVPEGAIPKDGPSAGITMVTSLVSAFTQRKVKKNLAMTGEITLRGKVLPVGGIKEKILAAKRAGIKELILCKENEKDINEIKPEYLKGLVFHYVSDIQQVVDLALLREKVDNPLF</sequence>
<protein>
    <recommendedName>
        <fullName evidence="1">Lon protease</fullName>
        <ecNumber evidence="1">3.4.21.53</ecNumber>
    </recommendedName>
    <alternativeName>
        <fullName evidence="1">ATP-dependent protease La</fullName>
    </alternativeName>
</protein>
<name>LON_PARD8</name>